<sequence>MQARDVILRPIITESSMAGADRKVYQFEVNRKATKTDVKVAVADVFGVTVKKVNIANVRGKNKRMGRYQGLTRNRKKATVSLTADSKDIEVFKNQEENK</sequence>
<dbReference type="EMBL" id="CP000411">
    <property type="protein sequence ID" value="ABJ56539.1"/>
    <property type="molecule type" value="Genomic_DNA"/>
</dbReference>
<dbReference type="RefSeq" id="WP_002817273.1">
    <property type="nucleotide sequence ID" value="NC_008528.1"/>
</dbReference>
<dbReference type="SMR" id="Q04G83"/>
<dbReference type="STRING" id="203123.OEOE_0597"/>
<dbReference type="GeneID" id="75065419"/>
<dbReference type="KEGG" id="ooe:OEOE_0597"/>
<dbReference type="eggNOG" id="COG0089">
    <property type="taxonomic scope" value="Bacteria"/>
</dbReference>
<dbReference type="HOGENOM" id="CLU_037562_3_2_9"/>
<dbReference type="Proteomes" id="UP000000774">
    <property type="component" value="Chromosome"/>
</dbReference>
<dbReference type="GO" id="GO:1990904">
    <property type="term" value="C:ribonucleoprotein complex"/>
    <property type="evidence" value="ECO:0007669"/>
    <property type="project" value="UniProtKB-KW"/>
</dbReference>
<dbReference type="GO" id="GO:0005840">
    <property type="term" value="C:ribosome"/>
    <property type="evidence" value="ECO:0007669"/>
    <property type="project" value="UniProtKB-KW"/>
</dbReference>
<dbReference type="GO" id="GO:0019843">
    <property type="term" value="F:rRNA binding"/>
    <property type="evidence" value="ECO:0007669"/>
    <property type="project" value="UniProtKB-UniRule"/>
</dbReference>
<dbReference type="GO" id="GO:0003735">
    <property type="term" value="F:structural constituent of ribosome"/>
    <property type="evidence" value="ECO:0007669"/>
    <property type="project" value="InterPro"/>
</dbReference>
<dbReference type="GO" id="GO:0006412">
    <property type="term" value="P:translation"/>
    <property type="evidence" value="ECO:0007669"/>
    <property type="project" value="UniProtKB-UniRule"/>
</dbReference>
<dbReference type="FunFam" id="3.30.70.330:FF:000001">
    <property type="entry name" value="50S ribosomal protein L23"/>
    <property type="match status" value="1"/>
</dbReference>
<dbReference type="Gene3D" id="3.30.70.330">
    <property type="match status" value="1"/>
</dbReference>
<dbReference type="HAMAP" id="MF_01369_B">
    <property type="entry name" value="Ribosomal_uL23_B"/>
    <property type="match status" value="1"/>
</dbReference>
<dbReference type="InterPro" id="IPR012677">
    <property type="entry name" value="Nucleotide-bd_a/b_plait_sf"/>
</dbReference>
<dbReference type="InterPro" id="IPR013025">
    <property type="entry name" value="Ribosomal_uL23-like"/>
</dbReference>
<dbReference type="InterPro" id="IPR012678">
    <property type="entry name" value="Ribosomal_uL23/eL15/eS24_sf"/>
</dbReference>
<dbReference type="NCBIfam" id="NF004363">
    <property type="entry name" value="PRK05738.2-4"/>
    <property type="match status" value="1"/>
</dbReference>
<dbReference type="PANTHER" id="PTHR11620">
    <property type="entry name" value="60S RIBOSOMAL PROTEIN L23A"/>
    <property type="match status" value="1"/>
</dbReference>
<dbReference type="Pfam" id="PF00276">
    <property type="entry name" value="Ribosomal_L23"/>
    <property type="match status" value="1"/>
</dbReference>
<dbReference type="SUPFAM" id="SSF54189">
    <property type="entry name" value="Ribosomal proteins S24e, L23 and L15e"/>
    <property type="match status" value="1"/>
</dbReference>
<keyword id="KW-1185">Reference proteome</keyword>
<keyword id="KW-0687">Ribonucleoprotein</keyword>
<keyword id="KW-0689">Ribosomal protein</keyword>
<keyword id="KW-0694">RNA-binding</keyword>
<keyword id="KW-0699">rRNA-binding</keyword>
<comment type="function">
    <text evidence="1">One of the early assembly proteins it binds 23S rRNA. One of the proteins that surrounds the polypeptide exit tunnel on the outside of the ribosome. Forms the main docking site for trigger factor binding to the ribosome.</text>
</comment>
<comment type="subunit">
    <text evidence="1">Part of the 50S ribosomal subunit. Contacts protein L29, and trigger factor when it is bound to the ribosome.</text>
</comment>
<comment type="similarity">
    <text evidence="1">Belongs to the universal ribosomal protein uL23 family.</text>
</comment>
<accession>Q04G83</accession>
<protein>
    <recommendedName>
        <fullName evidence="1">Large ribosomal subunit protein uL23</fullName>
    </recommendedName>
    <alternativeName>
        <fullName evidence="2">50S ribosomal protein L23</fullName>
    </alternativeName>
</protein>
<organism>
    <name type="scientific">Oenococcus oeni (strain ATCC BAA-331 / PSU-1)</name>
    <dbReference type="NCBI Taxonomy" id="203123"/>
    <lineage>
        <taxon>Bacteria</taxon>
        <taxon>Bacillati</taxon>
        <taxon>Bacillota</taxon>
        <taxon>Bacilli</taxon>
        <taxon>Lactobacillales</taxon>
        <taxon>Lactobacillaceae</taxon>
        <taxon>Oenococcus</taxon>
    </lineage>
</organism>
<reference key="1">
    <citation type="journal article" date="2006" name="Proc. Natl. Acad. Sci. U.S.A.">
        <title>Comparative genomics of the lactic acid bacteria.</title>
        <authorList>
            <person name="Makarova K.S."/>
            <person name="Slesarev A."/>
            <person name="Wolf Y.I."/>
            <person name="Sorokin A."/>
            <person name="Mirkin B."/>
            <person name="Koonin E.V."/>
            <person name="Pavlov A."/>
            <person name="Pavlova N."/>
            <person name="Karamychev V."/>
            <person name="Polouchine N."/>
            <person name="Shakhova V."/>
            <person name="Grigoriev I."/>
            <person name="Lou Y."/>
            <person name="Rohksar D."/>
            <person name="Lucas S."/>
            <person name="Huang K."/>
            <person name="Goodstein D.M."/>
            <person name="Hawkins T."/>
            <person name="Plengvidhya V."/>
            <person name="Welker D."/>
            <person name="Hughes J."/>
            <person name="Goh Y."/>
            <person name="Benson A."/>
            <person name="Baldwin K."/>
            <person name="Lee J.-H."/>
            <person name="Diaz-Muniz I."/>
            <person name="Dosti B."/>
            <person name="Smeianov V."/>
            <person name="Wechter W."/>
            <person name="Barabote R."/>
            <person name="Lorca G."/>
            <person name="Altermann E."/>
            <person name="Barrangou R."/>
            <person name="Ganesan B."/>
            <person name="Xie Y."/>
            <person name="Rawsthorne H."/>
            <person name="Tamir D."/>
            <person name="Parker C."/>
            <person name="Breidt F."/>
            <person name="Broadbent J.R."/>
            <person name="Hutkins R."/>
            <person name="O'Sullivan D."/>
            <person name="Steele J."/>
            <person name="Unlu G."/>
            <person name="Saier M.H. Jr."/>
            <person name="Klaenhammer T."/>
            <person name="Richardson P."/>
            <person name="Kozyavkin S."/>
            <person name="Weimer B.C."/>
            <person name="Mills D.A."/>
        </authorList>
    </citation>
    <scope>NUCLEOTIDE SEQUENCE [LARGE SCALE GENOMIC DNA]</scope>
    <source>
        <strain>ATCC BAA-331 / PSU-1</strain>
    </source>
</reference>
<feature type="chain" id="PRO_1000068126" description="Large ribosomal subunit protein uL23">
    <location>
        <begin position="1"/>
        <end position="99"/>
    </location>
</feature>
<gene>
    <name evidence="1" type="primary">rplW</name>
    <name type="ordered locus">OEOE_0597</name>
</gene>
<proteinExistence type="inferred from homology"/>
<evidence type="ECO:0000255" key="1">
    <source>
        <dbReference type="HAMAP-Rule" id="MF_01369"/>
    </source>
</evidence>
<evidence type="ECO:0000305" key="2"/>
<name>RL23_OENOB</name>